<accession>B8DCT6</accession>
<gene>
    <name evidence="1" type="primary">iolC</name>
    <name type="ordered locus">LMHCC_2251</name>
</gene>
<sequence>MNLNKHSERKFDLITVGRACIDLNAVEYNRPMEETMTFSKYVGGSPANIAIGTAKLGLKVGFIGKISADQHGRFIEKYMRDLSINTDGMVKDTEGRKVGLAFTEIKSPDECSILMYRENVADLYLTPEEISEDYIKEARVLLISGTALAQSPSREAVLKAVSLARKNDVAIAFELDYRPYTWTNTEETAVYYSLVAEQADVIIGTRDEFDMMENQVGGKNEATKAHLFQHQAEIVVIKHGVEGSFAYTKAGETFQAKAYKTKVLKTFGAGDSYASAFLYGLFSGESIETALKYGSAAASIVVSKHSSSDAMPTADEIKALIAQAE</sequence>
<comment type="function">
    <text evidence="1">Catalyzes the phosphorylation of 5-dehydro-2-deoxy-D-gluconate (2-deoxy-5-keto-D-gluconate or DKG) to 6-phospho-5-dehydro-2-deoxy-D-gluconate (DKGP).</text>
</comment>
<comment type="catalytic activity">
    <reaction evidence="1">
        <text>5-dehydro-2-deoxy-D-gluconate + ATP = 6-phospho-5-dehydro-2-deoxy-D-gluconate + ADP + H(+)</text>
        <dbReference type="Rhea" id="RHEA:13497"/>
        <dbReference type="ChEBI" id="CHEBI:15378"/>
        <dbReference type="ChEBI" id="CHEBI:16669"/>
        <dbReference type="ChEBI" id="CHEBI:30616"/>
        <dbReference type="ChEBI" id="CHEBI:57949"/>
        <dbReference type="ChEBI" id="CHEBI:456216"/>
        <dbReference type="EC" id="2.7.1.92"/>
    </reaction>
</comment>
<comment type="pathway">
    <text evidence="1">Polyol metabolism; myo-inositol degradation into acetyl-CoA; acetyl-CoA from myo-inositol: step 5/7.</text>
</comment>
<comment type="similarity">
    <text evidence="1">Belongs to the carbohydrate kinase PfkB family.</text>
</comment>
<feature type="chain" id="PRO_1000187306" description="5-dehydro-2-deoxygluconokinase">
    <location>
        <begin position="1"/>
        <end position="325"/>
    </location>
</feature>
<name>IOLC_LISMH</name>
<proteinExistence type="inferred from homology"/>
<dbReference type="EC" id="2.7.1.92" evidence="1"/>
<dbReference type="EMBL" id="CP001175">
    <property type="protein sequence ID" value="ACK40589.1"/>
    <property type="molecule type" value="Genomic_DNA"/>
</dbReference>
<dbReference type="RefSeq" id="WP_012581980.1">
    <property type="nucleotide sequence ID" value="NC_011660.1"/>
</dbReference>
<dbReference type="SMR" id="B8DCT6"/>
<dbReference type="KEGG" id="lmh:LMHCC_2251"/>
<dbReference type="HOGENOM" id="CLU_027634_6_0_9"/>
<dbReference type="UniPathway" id="UPA00076">
    <property type="reaction ID" value="UER00146"/>
</dbReference>
<dbReference type="GO" id="GO:0047590">
    <property type="term" value="F:5-dehydro-2-deoxygluconokinase activity"/>
    <property type="evidence" value="ECO:0007669"/>
    <property type="project" value="UniProtKB-UniRule"/>
</dbReference>
<dbReference type="GO" id="GO:0005524">
    <property type="term" value="F:ATP binding"/>
    <property type="evidence" value="ECO:0007669"/>
    <property type="project" value="UniProtKB-UniRule"/>
</dbReference>
<dbReference type="GO" id="GO:0019310">
    <property type="term" value="P:inositol catabolic process"/>
    <property type="evidence" value="ECO:0007669"/>
    <property type="project" value="UniProtKB-UniRule"/>
</dbReference>
<dbReference type="CDD" id="cd01166">
    <property type="entry name" value="KdgK"/>
    <property type="match status" value="1"/>
</dbReference>
<dbReference type="Gene3D" id="3.40.1190.20">
    <property type="match status" value="1"/>
</dbReference>
<dbReference type="Gene3D" id="2.20.150.10">
    <property type="entry name" value="putative 5-dehydro-2- deoxygluconokinase"/>
    <property type="match status" value="1"/>
</dbReference>
<dbReference type="HAMAP" id="MF_01668">
    <property type="entry name" value="IolC"/>
    <property type="match status" value="1"/>
</dbReference>
<dbReference type="InterPro" id="IPR002173">
    <property type="entry name" value="Carboh/pur_kinase_PfkB_CS"/>
</dbReference>
<dbReference type="InterPro" id="IPR022841">
    <property type="entry name" value="DKG_kinase_firmi"/>
</dbReference>
<dbReference type="InterPro" id="IPR030830">
    <property type="entry name" value="Myo_inos_IolC"/>
</dbReference>
<dbReference type="InterPro" id="IPR023314">
    <property type="entry name" value="Myo_inos_IolC-like_sf"/>
</dbReference>
<dbReference type="InterPro" id="IPR050306">
    <property type="entry name" value="PfkB_Carbo_kinase"/>
</dbReference>
<dbReference type="InterPro" id="IPR011611">
    <property type="entry name" value="PfkB_dom"/>
</dbReference>
<dbReference type="InterPro" id="IPR029056">
    <property type="entry name" value="Ribokinase-like"/>
</dbReference>
<dbReference type="NCBIfam" id="TIGR04382">
    <property type="entry name" value="myo_inos_iolC_N"/>
    <property type="match status" value="1"/>
</dbReference>
<dbReference type="PANTHER" id="PTHR43085:SF49">
    <property type="entry name" value="5-DEHYDRO-2-DEOXYGLUCONOKINASE"/>
    <property type="match status" value="1"/>
</dbReference>
<dbReference type="PANTHER" id="PTHR43085">
    <property type="entry name" value="HEXOKINASE FAMILY MEMBER"/>
    <property type="match status" value="1"/>
</dbReference>
<dbReference type="Pfam" id="PF00294">
    <property type="entry name" value="PfkB"/>
    <property type="match status" value="1"/>
</dbReference>
<dbReference type="SUPFAM" id="SSF53613">
    <property type="entry name" value="Ribokinase-like"/>
    <property type="match status" value="1"/>
</dbReference>
<dbReference type="PROSITE" id="PS00584">
    <property type="entry name" value="PFKB_KINASES_2"/>
    <property type="match status" value="1"/>
</dbReference>
<organism>
    <name type="scientific">Listeria monocytogenes serotype 4a (strain HCC23)</name>
    <dbReference type="NCBI Taxonomy" id="552536"/>
    <lineage>
        <taxon>Bacteria</taxon>
        <taxon>Bacillati</taxon>
        <taxon>Bacillota</taxon>
        <taxon>Bacilli</taxon>
        <taxon>Bacillales</taxon>
        <taxon>Listeriaceae</taxon>
        <taxon>Listeria</taxon>
    </lineage>
</organism>
<evidence type="ECO:0000255" key="1">
    <source>
        <dbReference type="HAMAP-Rule" id="MF_01668"/>
    </source>
</evidence>
<protein>
    <recommendedName>
        <fullName evidence="1">5-dehydro-2-deoxygluconokinase</fullName>
        <ecNumber evidence="1">2.7.1.92</ecNumber>
    </recommendedName>
    <alternativeName>
        <fullName evidence="1">2-deoxy-5-keto-D-gluconate kinase</fullName>
        <shortName evidence="1">DKG kinase</shortName>
    </alternativeName>
</protein>
<reference key="1">
    <citation type="journal article" date="2011" name="J. Bacteriol.">
        <title>Genome sequence of lineage III Listeria monocytogenes strain HCC23.</title>
        <authorList>
            <person name="Steele C.L."/>
            <person name="Donaldson J.R."/>
            <person name="Paul D."/>
            <person name="Banes M.M."/>
            <person name="Arick T."/>
            <person name="Bridges S.M."/>
            <person name="Lawrence M.L."/>
        </authorList>
    </citation>
    <scope>NUCLEOTIDE SEQUENCE [LARGE SCALE GENOMIC DNA]</scope>
    <source>
        <strain>HCC23</strain>
    </source>
</reference>
<keyword id="KW-0067">ATP-binding</keyword>
<keyword id="KW-0418">Kinase</keyword>
<keyword id="KW-0547">Nucleotide-binding</keyword>
<keyword id="KW-0808">Transferase</keyword>